<feature type="chain" id="PRO_0000277510" description="Galactose/methyl galactoside import ATP-binding protein MglA">
    <location>
        <begin position="1"/>
        <end position="506"/>
    </location>
</feature>
<feature type="domain" description="ABC transporter 1" evidence="1">
    <location>
        <begin position="14"/>
        <end position="249"/>
    </location>
</feature>
<feature type="domain" description="ABC transporter 2" evidence="1">
    <location>
        <begin position="264"/>
        <end position="506"/>
    </location>
</feature>
<feature type="binding site" evidence="1">
    <location>
        <begin position="46"/>
        <end position="53"/>
    </location>
    <ligand>
        <name>ATP</name>
        <dbReference type="ChEBI" id="CHEBI:30616"/>
    </ligand>
</feature>
<protein>
    <recommendedName>
        <fullName evidence="1">Galactose/methyl galactoside import ATP-binding protein MglA</fullName>
        <ecNumber evidence="1">7.5.2.11</ecNumber>
    </recommendedName>
</protein>
<reference key="1">
    <citation type="journal article" date="2006" name="BMC Genomics">
        <title>Complete genome sequence of Shigella flexneri 5b and comparison with Shigella flexneri 2a.</title>
        <authorList>
            <person name="Nie H."/>
            <person name="Yang F."/>
            <person name="Zhang X."/>
            <person name="Yang J."/>
            <person name="Chen L."/>
            <person name="Wang J."/>
            <person name="Xiong Z."/>
            <person name="Peng J."/>
            <person name="Sun L."/>
            <person name="Dong J."/>
            <person name="Xue Y."/>
            <person name="Xu X."/>
            <person name="Chen S."/>
            <person name="Yao Z."/>
            <person name="Shen Y."/>
            <person name="Jin Q."/>
        </authorList>
    </citation>
    <scope>NUCLEOTIDE SEQUENCE [LARGE SCALE GENOMIC DNA]</scope>
    <source>
        <strain>8401</strain>
    </source>
</reference>
<keyword id="KW-0067">ATP-binding</keyword>
<keyword id="KW-0997">Cell inner membrane</keyword>
<keyword id="KW-1003">Cell membrane</keyword>
<keyword id="KW-0472">Membrane</keyword>
<keyword id="KW-0547">Nucleotide-binding</keyword>
<keyword id="KW-0677">Repeat</keyword>
<keyword id="KW-0762">Sugar transport</keyword>
<keyword id="KW-1278">Translocase</keyword>
<keyword id="KW-0813">Transport</keyword>
<proteinExistence type="inferred from homology"/>
<accession>Q0T2X5</accession>
<gene>
    <name evidence="1" type="primary">mglA</name>
    <name type="ordered locus">SFV_2224</name>
</gene>
<evidence type="ECO:0000255" key="1">
    <source>
        <dbReference type="HAMAP-Rule" id="MF_01717"/>
    </source>
</evidence>
<evidence type="ECO:0000305" key="2"/>
<dbReference type="EC" id="7.5.2.11" evidence="1"/>
<dbReference type="EMBL" id="CP000266">
    <property type="protein sequence ID" value="ABF04340.1"/>
    <property type="status" value="ALT_INIT"/>
    <property type="molecule type" value="Genomic_DNA"/>
</dbReference>
<dbReference type="RefSeq" id="WP_000255054.1">
    <property type="nucleotide sequence ID" value="NC_008258.1"/>
</dbReference>
<dbReference type="SMR" id="Q0T2X5"/>
<dbReference type="KEGG" id="sfv:SFV_2224"/>
<dbReference type="HOGENOM" id="CLU_000604_92_3_6"/>
<dbReference type="Proteomes" id="UP000000659">
    <property type="component" value="Chromosome"/>
</dbReference>
<dbReference type="GO" id="GO:0005886">
    <property type="term" value="C:plasma membrane"/>
    <property type="evidence" value="ECO:0007669"/>
    <property type="project" value="UniProtKB-SubCell"/>
</dbReference>
<dbReference type="GO" id="GO:0005524">
    <property type="term" value="F:ATP binding"/>
    <property type="evidence" value="ECO:0007669"/>
    <property type="project" value="UniProtKB-KW"/>
</dbReference>
<dbReference type="GO" id="GO:0016887">
    <property type="term" value="F:ATP hydrolysis activity"/>
    <property type="evidence" value="ECO:0007669"/>
    <property type="project" value="InterPro"/>
</dbReference>
<dbReference type="CDD" id="cd03216">
    <property type="entry name" value="ABC_Carb_Monos_I"/>
    <property type="match status" value="1"/>
</dbReference>
<dbReference type="CDD" id="cd03215">
    <property type="entry name" value="ABC_Carb_Monos_II"/>
    <property type="match status" value="1"/>
</dbReference>
<dbReference type="FunFam" id="3.40.50.300:FF:000126">
    <property type="entry name" value="Galactose/methyl galactoside import ATP-binding protein MglA"/>
    <property type="match status" value="1"/>
</dbReference>
<dbReference type="FunFam" id="3.40.50.300:FF:000127">
    <property type="entry name" value="Ribose import ATP-binding protein RbsA"/>
    <property type="match status" value="1"/>
</dbReference>
<dbReference type="Gene3D" id="3.40.50.300">
    <property type="entry name" value="P-loop containing nucleotide triphosphate hydrolases"/>
    <property type="match status" value="2"/>
</dbReference>
<dbReference type="InterPro" id="IPR003593">
    <property type="entry name" value="AAA+_ATPase"/>
</dbReference>
<dbReference type="InterPro" id="IPR050107">
    <property type="entry name" value="ABC_carbohydrate_import_ATPase"/>
</dbReference>
<dbReference type="InterPro" id="IPR003439">
    <property type="entry name" value="ABC_transporter-like_ATP-bd"/>
</dbReference>
<dbReference type="InterPro" id="IPR017871">
    <property type="entry name" value="ABC_transporter-like_CS"/>
</dbReference>
<dbReference type="InterPro" id="IPR027417">
    <property type="entry name" value="P-loop_NTPase"/>
</dbReference>
<dbReference type="NCBIfam" id="NF008215">
    <property type="entry name" value="PRK10982.1"/>
    <property type="match status" value="1"/>
</dbReference>
<dbReference type="PANTHER" id="PTHR43790">
    <property type="entry name" value="CARBOHYDRATE TRANSPORT ATP-BINDING PROTEIN MG119-RELATED"/>
    <property type="match status" value="1"/>
</dbReference>
<dbReference type="PANTHER" id="PTHR43790:SF7">
    <property type="entry name" value="GALACTOSE_METHYL GALACTOSIDE IMPORT ATP-BINDING PROTEIN MGLA"/>
    <property type="match status" value="1"/>
</dbReference>
<dbReference type="Pfam" id="PF00005">
    <property type="entry name" value="ABC_tran"/>
    <property type="match status" value="2"/>
</dbReference>
<dbReference type="SMART" id="SM00382">
    <property type="entry name" value="AAA"/>
    <property type="match status" value="2"/>
</dbReference>
<dbReference type="SUPFAM" id="SSF52540">
    <property type="entry name" value="P-loop containing nucleoside triphosphate hydrolases"/>
    <property type="match status" value="2"/>
</dbReference>
<dbReference type="PROSITE" id="PS00211">
    <property type="entry name" value="ABC_TRANSPORTER_1"/>
    <property type="match status" value="1"/>
</dbReference>
<dbReference type="PROSITE" id="PS50893">
    <property type="entry name" value="ABC_TRANSPORTER_2"/>
    <property type="match status" value="2"/>
</dbReference>
<dbReference type="PROSITE" id="PS51260">
    <property type="entry name" value="MGLA"/>
    <property type="match status" value="1"/>
</dbReference>
<sequence length="506" mass="56433">MVSSTTPSSGEYLLEMSGINKSFPGVKALDNVNLKVRPHSIHALMGENGAGKSTLLKCMFGIYQKDSGTILFQGKEIDFHSAKEALENGISMVHQELNLVLQRSVMDNMWLGRYPTKGMFVDQDKMYRETKAIFDELDIDIDPRARVGTLSVSQMQMIEIAKAFSYNAKIVIMDEPTSSLTEKEVNHLFTIIRKLKERGCGIVYISHKMEEIFQLCDEVTVLRDGQWIATEPLAGLTMDKIIAMMVGRSLNQRFPDKENKPGEVILEVRNLTSLRQPSIRDVSFDLHKGEILGIAGLVGAKRTDIVETLFGIREKSAGTITLHGKQINNHNANEAINHGFALVTEERRSTGIYAYLDIGFNSLISNIRNYKNKVGLLDNSRMKSDTQWVIDSMRVKTPGHRTQIGSLSGGNQQKVIIGRWLLTQPEILMLDEPTRGIDVGAKFEIYQLIAELAKKGKGIIIISSEMPELLGITDRILVMSNGLVSGIVDTKTTTQNEILRLASLHL</sequence>
<comment type="function">
    <text evidence="1">Part of the ABC transporter complex MglABC involved in galactose/methyl galactoside import. Responsible for energy coupling to the transport system.</text>
</comment>
<comment type="catalytic activity">
    <reaction evidence="1">
        <text>D-galactose(out) + ATP + H2O = D-galactose(in) + ADP + phosphate + H(+)</text>
        <dbReference type="Rhea" id="RHEA:60156"/>
        <dbReference type="ChEBI" id="CHEBI:4139"/>
        <dbReference type="ChEBI" id="CHEBI:15377"/>
        <dbReference type="ChEBI" id="CHEBI:15378"/>
        <dbReference type="ChEBI" id="CHEBI:30616"/>
        <dbReference type="ChEBI" id="CHEBI:43474"/>
        <dbReference type="ChEBI" id="CHEBI:456216"/>
        <dbReference type="EC" id="7.5.2.11"/>
    </reaction>
    <physiologicalReaction direction="left-to-right" evidence="1">
        <dbReference type="Rhea" id="RHEA:60157"/>
    </physiologicalReaction>
</comment>
<comment type="catalytic activity">
    <reaction evidence="1">
        <text>methyl beta-D-galactoside(out) + ATP + H2O = methyl beta-D-galactoside(in) + ADP + phosphate + H(+)</text>
        <dbReference type="Rhea" id="RHEA:72531"/>
        <dbReference type="ChEBI" id="CHEBI:15377"/>
        <dbReference type="ChEBI" id="CHEBI:15378"/>
        <dbReference type="ChEBI" id="CHEBI:17540"/>
        <dbReference type="ChEBI" id="CHEBI:30616"/>
        <dbReference type="ChEBI" id="CHEBI:43474"/>
        <dbReference type="ChEBI" id="CHEBI:456216"/>
    </reaction>
    <physiologicalReaction direction="left-to-right" evidence="1">
        <dbReference type="Rhea" id="RHEA:72532"/>
    </physiologicalReaction>
</comment>
<comment type="subunit">
    <text evidence="1">The complex is composed of one ATP-binding protein (MglA), two transmembrane proteins (MglC) and a solute-binding protein (MglB).</text>
</comment>
<comment type="subcellular location">
    <subcellularLocation>
        <location evidence="1">Cell inner membrane</location>
        <topology evidence="1">Peripheral membrane protein</topology>
    </subcellularLocation>
</comment>
<comment type="similarity">
    <text evidence="1">Belongs to the ABC transporter superfamily. Galactose/methyl galactoside importer (TC 3.A.1.2.3) family.</text>
</comment>
<comment type="sequence caution" evidence="2">
    <conflict type="erroneous initiation">
        <sequence resource="EMBL-CDS" id="ABF04340"/>
    </conflict>
</comment>
<organism>
    <name type="scientific">Shigella flexneri serotype 5b (strain 8401)</name>
    <dbReference type="NCBI Taxonomy" id="373384"/>
    <lineage>
        <taxon>Bacteria</taxon>
        <taxon>Pseudomonadati</taxon>
        <taxon>Pseudomonadota</taxon>
        <taxon>Gammaproteobacteria</taxon>
        <taxon>Enterobacterales</taxon>
        <taxon>Enterobacteriaceae</taxon>
        <taxon>Shigella</taxon>
    </lineage>
</organism>
<name>MGLA_SHIF8</name>